<sequence>MAVNTQPIIRLTNVTKSYGEHQVLKNINLDLEAGKFYTLLGPSGCGKTTILRTIAGFTDATSGQVYFDGQVINTLPANQRQVNTVFQDYALFPHMNVAENVAFGLKLHKVPKDEIETRVQKALAMVQLADLGEREISEISGGQQQRVAIARALVMQPKVLLLDEPLSALDAKLRKDMQYELRDLQQRLGITFLFVTHDQEEALAMSDEIFVMNAGEILQGGSPVDIYDEPINHFVANFIGESNIIPGKMLKDFEVEFVGKQFECADAGMQPNEAVEVVLRPEDLDIVAANQGKLVVTVDSQLFRGNYFEIVAYDTDHNEWLVHSTNPAAEGEPIGLTFDPQDIHVMRLNESEAAFDARLEQYEDD</sequence>
<name>POTA_LACPL</name>
<gene>
    <name evidence="1" type="primary">potA</name>
    <name type="ordered locus">lp_0318</name>
</gene>
<dbReference type="EC" id="7.6.2.11" evidence="1"/>
<dbReference type="EMBL" id="AL935263">
    <property type="protein sequence ID" value="CCC77842.1"/>
    <property type="molecule type" value="Genomic_DNA"/>
</dbReference>
<dbReference type="RefSeq" id="WP_003646423.1">
    <property type="nucleotide sequence ID" value="NC_004567.2"/>
</dbReference>
<dbReference type="RefSeq" id="YP_004888356.1">
    <property type="nucleotide sequence ID" value="NC_004567.2"/>
</dbReference>
<dbReference type="SMR" id="Q88ZJ6"/>
<dbReference type="STRING" id="220668.lp_0318"/>
<dbReference type="EnsemblBacteria" id="CCC77842">
    <property type="protein sequence ID" value="CCC77842"/>
    <property type="gene ID" value="lp_0318"/>
</dbReference>
<dbReference type="KEGG" id="lpl:lp_0318"/>
<dbReference type="PATRIC" id="fig|220668.9.peg.270"/>
<dbReference type="eggNOG" id="COG3842">
    <property type="taxonomic scope" value="Bacteria"/>
</dbReference>
<dbReference type="HOGENOM" id="CLU_000604_1_1_9"/>
<dbReference type="OrthoDB" id="9790614at2"/>
<dbReference type="PhylomeDB" id="Q88ZJ6"/>
<dbReference type="Proteomes" id="UP000000432">
    <property type="component" value="Chromosome"/>
</dbReference>
<dbReference type="GO" id="GO:0043190">
    <property type="term" value="C:ATP-binding cassette (ABC) transporter complex"/>
    <property type="evidence" value="ECO:0007669"/>
    <property type="project" value="InterPro"/>
</dbReference>
<dbReference type="GO" id="GO:0015594">
    <property type="term" value="F:ABC-type putrescine transporter activity"/>
    <property type="evidence" value="ECO:0007669"/>
    <property type="project" value="InterPro"/>
</dbReference>
<dbReference type="GO" id="GO:0005524">
    <property type="term" value="F:ATP binding"/>
    <property type="evidence" value="ECO:0007669"/>
    <property type="project" value="UniProtKB-KW"/>
</dbReference>
<dbReference type="GO" id="GO:0016887">
    <property type="term" value="F:ATP hydrolysis activity"/>
    <property type="evidence" value="ECO:0007669"/>
    <property type="project" value="InterPro"/>
</dbReference>
<dbReference type="CDD" id="cd03300">
    <property type="entry name" value="ABC_PotA_N"/>
    <property type="match status" value="1"/>
</dbReference>
<dbReference type="FunFam" id="3.40.50.300:FF:000133">
    <property type="entry name" value="Spermidine/putrescine import ATP-binding protein PotA"/>
    <property type="match status" value="1"/>
</dbReference>
<dbReference type="Gene3D" id="2.40.50.100">
    <property type="match status" value="1"/>
</dbReference>
<dbReference type="Gene3D" id="3.40.50.300">
    <property type="entry name" value="P-loop containing nucleotide triphosphate hydrolases"/>
    <property type="match status" value="1"/>
</dbReference>
<dbReference type="InterPro" id="IPR003593">
    <property type="entry name" value="AAA+_ATPase"/>
</dbReference>
<dbReference type="InterPro" id="IPR050093">
    <property type="entry name" value="ABC_SmlMolc_Importer"/>
</dbReference>
<dbReference type="InterPro" id="IPR003439">
    <property type="entry name" value="ABC_transporter-like_ATP-bd"/>
</dbReference>
<dbReference type="InterPro" id="IPR017871">
    <property type="entry name" value="ABC_transporter-like_CS"/>
</dbReference>
<dbReference type="InterPro" id="IPR008995">
    <property type="entry name" value="Mo/tungstate-bd_C_term_dom"/>
</dbReference>
<dbReference type="InterPro" id="IPR027417">
    <property type="entry name" value="P-loop_NTPase"/>
</dbReference>
<dbReference type="InterPro" id="IPR005893">
    <property type="entry name" value="PotA-like"/>
</dbReference>
<dbReference type="InterPro" id="IPR017879">
    <property type="entry name" value="PotA_ATP-bd"/>
</dbReference>
<dbReference type="InterPro" id="IPR013611">
    <property type="entry name" value="Transp-assoc_OB_typ2"/>
</dbReference>
<dbReference type="NCBIfam" id="TIGR01187">
    <property type="entry name" value="potA"/>
    <property type="match status" value="1"/>
</dbReference>
<dbReference type="PANTHER" id="PTHR42781">
    <property type="entry name" value="SPERMIDINE/PUTRESCINE IMPORT ATP-BINDING PROTEIN POTA"/>
    <property type="match status" value="1"/>
</dbReference>
<dbReference type="PANTHER" id="PTHR42781:SF4">
    <property type="entry name" value="SPERMIDINE_PUTRESCINE IMPORT ATP-BINDING PROTEIN POTA"/>
    <property type="match status" value="1"/>
</dbReference>
<dbReference type="Pfam" id="PF00005">
    <property type="entry name" value="ABC_tran"/>
    <property type="match status" value="1"/>
</dbReference>
<dbReference type="Pfam" id="PF08402">
    <property type="entry name" value="TOBE_2"/>
    <property type="match status" value="1"/>
</dbReference>
<dbReference type="SMART" id="SM00382">
    <property type="entry name" value="AAA"/>
    <property type="match status" value="1"/>
</dbReference>
<dbReference type="SUPFAM" id="SSF50331">
    <property type="entry name" value="MOP-like"/>
    <property type="match status" value="1"/>
</dbReference>
<dbReference type="SUPFAM" id="SSF52540">
    <property type="entry name" value="P-loop containing nucleoside triphosphate hydrolases"/>
    <property type="match status" value="1"/>
</dbReference>
<dbReference type="PROSITE" id="PS00211">
    <property type="entry name" value="ABC_TRANSPORTER_1"/>
    <property type="match status" value="1"/>
</dbReference>
<dbReference type="PROSITE" id="PS50893">
    <property type="entry name" value="ABC_TRANSPORTER_2"/>
    <property type="match status" value="1"/>
</dbReference>
<dbReference type="PROSITE" id="PS51305">
    <property type="entry name" value="POTA"/>
    <property type="match status" value="1"/>
</dbReference>
<accession>Q88ZJ6</accession>
<accession>F9UTS2</accession>
<keyword id="KW-0067">ATP-binding</keyword>
<keyword id="KW-1003">Cell membrane</keyword>
<keyword id="KW-0472">Membrane</keyword>
<keyword id="KW-0547">Nucleotide-binding</keyword>
<keyword id="KW-1185">Reference proteome</keyword>
<keyword id="KW-1278">Translocase</keyword>
<keyword id="KW-0813">Transport</keyword>
<feature type="chain" id="PRO_0000286233" description="Spermidine/putrescine import ATP-binding protein PotA">
    <location>
        <begin position="1"/>
        <end position="365"/>
    </location>
</feature>
<feature type="domain" description="ABC transporter" evidence="1">
    <location>
        <begin position="9"/>
        <end position="239"/>
    </location>
</feature>
<feature type="binding site" evidence="1">
    <location>
        <begin position="41"/>
        <end position="48"/>
    </location>
    <ligand>
        <name>ATP</name>
        <dbReference type="ChEBI" id="CHEBI:30616"/>
    </ligand>
</feature>
<evidence type="ECO:0000255" key="1">
    <source>
        <dbReference type="HAMAP-Rule" id="MF_01726"/>
    </source>
</evidence>
<proteinExistence type="inferred from homology"/>
<comment type="function">
    <text evidence="1">Part of the ABC transporter complex PotABCD involved in spermidine/putrescine import. Responsible for energy coupling to the transport system.</text>
</comment>
<comment type="catalytic activity">
    <reaction evidence="1">
        <text>ATP + H2O + polyamine-[polyamine-binding protein]Side 1 = ADP + phosphate + polyamineSide 2 + [polyamine-binding protein]Side 1.</text>
        <dbReference type="EC" id="7.6.2.11"/>
    </reaction>
</comment>
<comment type="subunit">
    <text evidence="1">The complex is composed of two ATP-binding proteins (PotA), two transmembrane proteins (PotB and PotC) and a solute-binding protein (PotD).</text>
</comment>
<comment type="subcellular location">
    <subcellularLocation>
        <location evidence="1">Cell membrane</location>
        <topology evidence="1">Peripheral membrane protein</topology>
    </subcellularLocation>
</comment>
<comment type="similarity">
    <text evidence="1">Belongs to the ABC transporter superfamily. Spermidine/putrescine importer (TC 3.A.1.11.1) family.</text>
</comment>
<reference key="1">
    <citation type="journal article" date="2003" name="Proc. Natl. Acad. Sci. U.S.A.">
        <title>Complete genome sequence of Lactobacillus plantarum WCFS1.</title>
        <authorList>
            <person name="Kleerebezem M."/>
            <person name="Boekhorst J."/>
            <person name="van Kranenburg R."/>
            <person name="Molenaar D."/>
            <person name="Kuipers O.P."/>
            <person name="Leer R."/>
            <person name="Tarchini R."/>
            <person name="Peters S.A."/>
            <person name="Sandbrink H.M."/>
            <person name="Fiers M.W.E.J."/>
            <person name="Stiekema W."/>
            <person name="Klein Lankhorst R.M."/>
            <person name="Bron P.A."/>
            <person name="Hoffer S.M."/>
            <person name="Nierop Groot M.N."/>
            <person name="Kerkhoven R."/>
            <person name="De Vries M."/>
            <person name="Ursing B."/>
            <person name="De Vos W.M."/>
            <person name="Siezen R.J."/>
        </authorList>
    </citation>
    <scope>NUCLEOTIDE SEQUENCE [LARGE SCALE GENOMIC DNA]</scope>
    <source>
        <strain>ATCC BAA-793 / NCIMB 8826 / WCFS1</strain>
    </source>
</reference>
<reference key="2">
    <citation type="journal article" date="2012" name="J. Bacteriol.">
        <title>Complete resequencing and reannotation of the Lactobacillus plantarum WCFS1 genome.</title>
        <authorList>
            <person name="Siezen R.J."/>
            <person name="Francke C."/>
            <person name="Renckens B."/>
            <person name="Boekhorst J."/>
            <person name="Wels M."/>
            <person name="Kleerebezem M."/>
            <person name="van Hijum S.A."/>
        </authorList>
    </citation>
    <scope>NUCLEOTIDE SEQUENCE [LARGE SCALE GENOMIC DNA]</scope>
    <scope>GENOME REANNOTATION</scope>
    <source>
        <strain>ATCC BAA-793 / NCIMB 8826 / WCFS1</strain>
    </source>
</reference>
<organism>
    <name type="scientific">Lactiplantibacillus plantarum (strain ATCC BAA-793 / NCIMB 8826 / WCFS1)</name>
    <name type="common">Lactobacillus plantarum</name>
    <dbReference type="NCBI Taxonomy" id="220668"/>
    <lineage>
        <taxon>Bacteria</taxon>
        <taxon>Bacillati</taxon>
        <taxon>Bacillota</taxon>
        <taxon>Bacilli</taxon>
        <taxon>Lactobacillales</taxon>
        <taxon>Lactobacillaceae</taxon>
        <taxon>Lactiplantibacillus</taxon>
    </lineage>
</organism>
<protein>
    <recommendedName>
        <fullName evidence="1">Spermidine/putrescine import ATP-binding protein PotA</fullName>
        <ecNumber evidence="1">7.6.2.11</ecNumber>
    </recommendedName>
</protein>